<comment type="function">
    <text>Required for surface presentation of invasion plasmid antigens. Could play a role in preserving the translocation competence of the ipa antigens. Required for invasion and for secretion of the three Ipa proteins.</text>
</comment>
<comment type="subcellular location">
    <subcellularLocation>
        <location evidence="2">Cell membrane</location>
        <topology evidence="2">Multi-pass membrane protein</topology>
    </subcellularLocation>
</comment>
<comment type="similarity">
    <text evidence="2">Belongs to the FliP/MopC/SpaP family.</text>
</comment>
<organism>
    <name type="scientific">Shigella flexneri</name>
    <dbReference type="NCBI Taxonomy" id="623"/>
    <lineage>
        <taxon>Bacteria</taxon>
        <taxon>Pseudomonadati</taxon>
        <taxon>Pseudomonadota</taxon>
        <taxon>Gammaproteobacteria</taxon>
        <taxon>Enterobacterales</taxon>
        <taxon>Enterobacteriaceae</taxon>
        <taxon>Shigella</taxon>
    </lineage>
</organism>
<gene>
    <name type="primary">spaP</name>
    <name type="synonym">spa24</name>
    <name type="ordered locus">CP0153</name>
</gene>
<proteinExistence type="evidence at protein level"/>
<protein>
    <recommendedName>
        <fullName>Surface presentation of antigens protein SpaP</fullName>
    </recommendedName>
    <alternativeName>
        <fullName>Spa24 protein</fullName>
    </alternativeName>
</protein>
<keyword id="KW-0002">3D-structure</keyword>
<keyword id="KW-1003">Cell membrane</keyword>
<keyword id="KW-0472">Membrane</keyword>
<keyword id="KW-0614">Plasmid</keyword>
<keyword id="KW-1185">Reference proteome</keyword>
<keyword id="KW-0812">Transmembrane</keyword>
<keyword id="KW-1133">Transmembrane helix</keyword>
<keyword id="KW-0843">Virulence</keyword>
<dbReference type="EMBL" id="M81458">
    <property type="protein sequence ID" value="AAA26544.1"/>
    <property type="molecule type" value="Genomic_DNA"/>
</dbReference>
<dbReference type="EMBL" id="D13663">
    <property type="protein sequence ID" value="BAA02829.1"/>
    <property type="molecule type" value="Genomic_DNA"/>
</dbReference>
<dbReference type="EMBL" id="AL391753">
    <property type="protein sequence ID" value="CAC05828.1"/>
    <property type="molecule type" value="Genomic_DNA"/>
</dbReference>
<dbReference type="EMBL" id="AF348706">
    <property type="protein sequence ID" value="AAK18472.1"/>
    <property type="molecule type" value="Genomic_DNA"/>
</dbReference>
<dbReference type="EMBL" id="AF386526">
    <property type="protein sequence ID" value="AAL72307.1"/>
    <property type="molecule type" value="Genomic_DNA"/>
</dbReference>
<dbReference type="PIR" id="F42284">
    <property type="entry name" value="F42284"/>
</dbReference>
<dbReference type="RefSeq" id="NP_085316.1">
    <property type="nucleotide sequence ID" value="NC_002698.1"/>
</dbReference>
<dbReference type="RefSeq" id="NP_858286.1">
    <property type="nucleotide sequence ID" value="NC_004851.1"/>
</dbReference>
<dbReference type="RefSeq" id="WP_000947539.1">
    <property type="nucleotide sequence ID" value="NZ_WPGS01000043.1"/>
</dbReference>
<dbReference type="RefSeq" id="YP_009062510.1">
    <property type="nucleotide sequence ID" value="NC_024996.1"/>
</dbReference>
<dbReference type="PDB" id="6R6B">
    <property type="method" value="EM"/>
    <property type="resolution" value="3.50 A"/>
    <property type="chains" value="A/B/C/D/E=1-216"/>
</dbReference>
<dbReference type="PDB" id="6RWY">
    <property type="method" value="EM"/>
    <property type="resolution" value="5.11 A"/>
    <property type="chains" value="a/b/c/d/e=1-216"/>
</dbReference>
<dbReference type="PDB" id="8AXK">
    <property type="method" value="EM"/>
    <property type="resolution" value="4.05 A"/>
    <property type="chains" value="A/B/C/D/E=1-216"/>
</dbReference>
<dbReference type="PDBsum" id="6R6B"/>
<dbReference type="PDBsum" id="6RWY"/>
<dbReference type="PDBsum" id="8AXK"/>
<dbReference type="EMDB" id="EMD-15700"/>
<dbReference type="EMDB" id="EMD-4734"/>
<dbReference type="SMR" id="P0A1L3"/>
<dbReference type="TCDB" id="3.A.6.1.2">
    <property type="family name" value="the type iii (virulence-related) secretory pathway (iiisp) family"/>
</dbReference>
<dbReference type="PaxDb" id="198214-CP0153"/>
<dbReference type="GeneID" id="1238003"/>
<dbReference type="KEGG" id="sfl:CP0153"/>
<dbReference type="PATRIC" id="fig|198214.7.peg.5398"/>
<dbReference type="HOGENOM" id="CLU_042028_2_0_6"/>
<dbReference type="Proteomes" id="UP000001006">
    <property type="component" value="Plasmid pCP301"/>
</dbReference>
<dbReference type="GO" id="GO:0005886">
    <property type="term" value="C:plasma membrane"/>
    <property type="evidence" value="ECO:0007669"/>
    <property type="project" value="UniProtKB-SubCell"/>
</dbReference>
<dbReference type="GO" id="GO:0009306">
    <property type="term" value="P:protein secretion"/>
    <property type="evidence" value="ECO:0007669"/>
    <property type="project" value="InterPro"/>
</dbReference>
<dbReference type="InterPro" id="IPR005838">
    <property type="entry name" value="T3SS_IM_P"/>
</dbReference>
<dbReference type="InterPro" id="IPR005773">
    <property type="entry name" value="T3SS_YscR-like"/>
</dbReference>
<dbReference type="NCBIfam" id="NF009437">
    <property type="entry name" value="PRK12796.1"/>
    <property type="match status" value="1"/>
</dbReference>
<dbReference type="NCBIfam" id="NF009438">
    <property type="entry name" value="PRK12797.1"/>
    <property type="match status" value="1"/>
</dbReference>
<dbReference type="NCBIfam" id="TIGR01102">
    <property type="entry name" value="yscR"/>
    <property type="match status" value="1"/>
</dbReference>
<dbReference type="PANTHER" id="PTHR30587">
    <property type="entry name" value="FLAGELLAR BIOSYNTHETIC PROTEIN FLIP"/>
    <property type="match status" value="1"/>
</dbReference>
<dbReference type="PANTHER" id="PTHR30587:SF2">
    <property type="entry name" value="SURFACE PRESENTATION OF ANTIGENS PROTEIN SPAP"/>
    <property type="match status" value="1"/>
</dbReference>
<dbReference type="Pfam" id="PF00813">
    <property type="entry name" value="FliP"/>
    <property type="match status" value="1"/>
</dbReference>
<dbReference type="PRINTS" id="PR01302">
    <property type="entry name" value="TYPE3IMPPROT"/>
</dbReference>
<dbReference type="PROSITE" id="PS01060">
    <property type="entry name" value="FLIP_1"/>
    <property type="match status" value="1"/>
</dbReference>
<dbReference type="PROSITE" id="PS01061">
    <property type="entry name" value="FLIP_2"/>
    <property type="match status" value="1"/>
</dbReference>
<reference key="1">
    <citation type="journal article" date="1992" name="J. Bacteriol.">
        <title>Surface presentation of Shigella flexneri invasion plasmid antigens requires the products of the spa locus.</title>
        <authorList>
            <person name="Venkatesan M.M."/>
            <person name="Buysse J.M."/>
            <person name="Oaks E.V."/>
        </authorList>
    </citation>
    <scope>NUCLEOTIDE SEQUENCE [GENOMIC DNA]</scope>
    <source>
        <strain>M90T / Serotype 5a</strain>
        <plasmid>pWR100</plasmid>
    </source>
</reference>
<reference key="2">
    <citation type="journal article" date="1993" name="J. Bacteriol.">
        <title>Eight genes in region 5 that form an operon are essential for invasion of epithelial cells by Shigella flexneri 2a.</title>
        <authorList>
            <person name="Sasakawa C."/>
            <person name="Komatsu K."/>
            <person name="Tobe T."/>
            <person name="Suzuki T."/>
            <person name="Yoshikawa M."/>
        </authorList>
    </citation>
    <scope>NUCLEOTIDE SEQUENCE [GENOMIC DNA]</scope>
    <source>
        <strain>YSH6000 / Serotype 2a</strain>
        <plasmid>pMYSH6000</plasmid>
    </source>
</reference>
<reference key="3">
    <citation type="journal article" date="2000" name="Mol. Microbiol.">
        <title>The virulence plasmid pWR100 and the repertoire of proteins secreted by the type III secretion apparatus of Shigella flexneri.</title>
        <authorList>
            <person name="Buchrieser C."/>
            <person name="Glaser P."/>
            <person name="Rusniok C."/>
            <person name="Nedjari H."/>
            <person name="d'Hauteville H."/>
            <person name="Kunst F."/>
            <person name="Sansonetti P.J."/>
            <person name="Parsot C."/>
        </authorList>
    </citation>
    <scope>NUCLEOTIDE SEQUENCE [GENOMIC DNA]</scope>
    <source>
        <strain>M90T / Serotype 5a</strain>
        <plasmid>pWR100</plasmid>
    </source>
</reference>
<reference key="4">
    <citation type="journal article" date="2001" name="Infect. Immun.">
        <title>Complete DNA sequence and analysis of the large virulence plasmid of Shigella flexneri.</title>
        <authorList>
            <person name="Venkatesan M.M."/>
            <person name="Goldberg M.B."/>
            <person name="Rose D.J."/>
            <person name="Grotbeck E.J."/>
            <person name="Burland V."/>
            <person name="Blattner F.R."/>
        </authorList>
    </citation>
    <scope>NUCLEOTIDE SEQUENCE [GENOMIC DNA]</scope>
    <source>
        <strain>M90T / Serotype 5a</strain>
        <plasmid>pWR501</plasmid>
    </source>
</reference>
<reference key="5">
    <citation type="journal article" date="2002" name="Nucleic Acids Res.">
        <title>Genome sequence of Shigella flexneri 2a: insights into pathogenicity through comparison with genomes of Escherichia coli K12 and O157.</title>
        <authorList>
            <person name="Jin Q."/>
            <person name="Yuan Z."/>
            <person name="Xu J."/>
            <person name="Wang Y."/>
            <person name="Shen Y."/>
            <person name="Lu W."/>
            <person name="Wang J."/>
            <person name="Liu H."/>
            <person name="Yang J."/>
            <person name="Yang F."/>
            <person name="Zhang X."/>
            <person name="Zhang J."/>
            <person name="Yang G."/>
            <person name="Wu H."/>
            <person name="Qu D."/>
            <person name="Dong J."/>
            <person name="Sun L."/>
            <person name="Xue Y."/>
            <person name="Zhao A."/>
            <person name="Gao Y."/>
            <person name="Zhu J."/>
            <person name="Kan B."/>
            <person name="Ding K."/>
            <person name="Chen S."/>
            <person name="Cheng H."/>
            <person name="Yao Z."/>
            <person name="He B."/>
            <person name="Chen R."/>
            <person name="Ma D."/>
            <person name="Qiang B."/>
            <person name="Wen Y."/>
            <person name="Hou Y."/>
            <person name="Yu J."/>
        </authorList>
    </citation>
    <scope>NUCLEOTIDE SEQUENCE [LARGE SCALE GENOMIC DNA]</scope>
    <source>
        <strain>301 / Serotype 2a</strain>
        <plasmid>pCP301</plasmid>
    </source>
</reference>
<feature type="chain" id="PRO_0000191993" description="Surface presentation of antigens protein SpaP">
    <location>
        <begin position="1"/>
        <end position="216"/>
    </location>
</feature>
<feature type="transmembrane region" description="Helical" evidence="1">
    <location>
        <begin position="8"/>
        <end position="28"/>
    </location>
</feature>
<feature type="transmembrane region" description="Helical" evidence="1">
    <location>
        <begin position="52"/>
        <end position="72"/>
    </location>
</feature>
<feature type="transmembrane region" description="Helical" evidence="1">
    <location>
        <begin position="153"/>
        <end position="173"/>
    </location>
</feature>
<feature type="transmembrane region" description="Helical" evidence="1">
    <location>
        <begin position="183"/>
        <end position="203"/>
    </location>
</feature>
<feature type="turn" evidence="3">
    <location>
        <begin position="13"/>
        <end position="15"/>
    </location>
</feature>
<feature type="helix" evidence="3">
    <location>
        <begin position="17"/>
        <end position="20"/>
    </location>
</feature>
<feature type="strand" evidence="3">
    <location>
        <begin position="23"/>
        <end position="26"/>
    </location>
</feature>
<feature type="helix" evidence="3">
    <location>
        <begin position="27"/>
        <end position="38"/>
    </location>
</feature>
<feature type="turn" evidence="3">
    <location>
        <begin position="39"/>
        <end position="42"/>
    </location>
</feature>
<feature type="strand" evidence="3">
    <location>
        <begin position="44"/>
        <end position="47"/>
    </location>
</feature>
<feature type="helix" evidence="3">
    <location>
        <begin position="49"/>
        <end position="77"/>
    </location>
</feature>
<feature type="helix" evidence="3">
    <location>
        <begin position="85"/>
        <end position="94"/>
    </location>
</feature>
<feature type="helix" evidence="3">
    <location>
        <begin position="99"/>
        <end position="106"/>
    </location>
</feature>
<feature type="turn" evidence="3">
    <location>
        <begin position="109"/>
        <end position="111"/>
    </location>
</feature>
<feature type="helix" evidence="3">
    <location>
        <begin position="112"/>
        <end position="114"/>
    </location>
</feature>
<feature type="turn" evidence="3">
    <location>
        <begin position="136"/>
        <end position="138"/>
    </location>
</feature>
<feature type="helix" evidence="3">
    <location>
        <begin position="139"/>
        <end position="158"/>
    </location>
</feature>
<feature type="helix" evidence="3">
    <location>
        <begin position="159"/>
        <end position="161"/>
    </location>
</feature>
<feature type="helix" evidence="3">
    <location>
        <begin position="163"/>
        <end position="173"/>
    </location>
</feature>
<feature type="helix" evidence="3">
    <location>
        <begin position="182"/>
        <end position="195"/>
    </location>
</feature>
<feature type="turn" evidence="3">
    <location>
        <begin position="196"/>
        <end position="199"/>
    </location>
</feature>
<feature type="helix" evidence="3">
    <location>
        <begin position="200"/>
        <end position="208"/>
    </location>
</feature>
<feature type="turn" evidence="3">
    <location>
        <begin position="209"/>
        <end position="211"/>
    </location>
</feature>
<geneLocation type="plasmid">
    <name>pWR100</name>
</geneLocation>
<geneLocation type="plasmid">
    <name>pWR501</name>
</geneLocation>
<geneLocation type="plasmid">
    <name>pMYSH6000</name>
</geneLocation>
<geneLocation type="plasmid">
    <name>pCP301</name>
</geneLocation>
<name>SPAP_SHIFL</name>
<sequence>MLSDMSLIATLSFFTLLPFLVAAGTCYIKFSIVFVMVRNALGLQQVPSNMTLNGIALIMALFVMKPIIEAGYENYLNGPQKFDTISDIVRFSDSGLMEYKQYLKKHTDLELARFFQRSEEENADLKSAENNDYSLFSLLPAYALSEIKDAFKIGFYLYLPFVVVDLVISSILLALGMMMMSPITISVPIKLVLFVALDGWGILSKALIEQYINIPA</sequence>
<accession>P0A1L3</accession>
<accession>P35529</accession>
<evidence type="ECO:0000255" key="1"/>
<evidence type="ECO:0000305" key="2"/>
<evidence type="ECO:0007829" key="3">
    <source>
        <dbReference type="PDB" id="6R6B"/>
    </source>
</evidence>